<protein>
    <recommendedName>
        <fullName>C-X-C motif chemokine 17</fullName>
        <shortName>6-Cys CXCL17</shortName>
    </recommendedName>
    <alternativeName>
        <fullName>13.6 kDa protein</fullName>
    </alternativeName>
    <alternativeName>
        <fullName>VEGF coregulated chemokine 1</fullName>
    </alternativeName>
    <component>
        <recommendedName>
            <fullName>4-Cys CXCL17</fullName>
        </recommendedName>
    </component>
</protein>
<accession>Q5UW37</accession>
<name>CXL17_MOUSE</name>
<proteinExistence type="evidence at transcript level"/>
<feature type="signal peptide" evidence="3">
    <location>
        <begin position="1"/>
        <end position="22"/>
    </location>
</feature>
<feature type="chain" id="PRO_5000000292" description="C-X-C motif chemokine 17">
    <location>
        <begin position="23"/>
        <end position="119"/>
    </location>
</feature>
<feature type="chain" id="PRO_0000438488" description="4-Cys CXCL17" evidence="7">
    <location>
        <begin position="64"/>
        <end position="119"/>
    </location>
</feature>
<feature type="region of interest" description="Disordered" evidence="4">
    <location>
        <begin position="75"/>
        <end position="100"/>
    </location>
</feature>
<feature type="compositionally biased region" description="Basic residues" evidence="4">
    <location>
        <begin position="82"/>
        <end position="98"/>
    </location>
</feature>
<feature type="site" description="Cleavage" evidence="1">
    <location>
        <begin position="63"/>
        <end position="64"/>
    </location>
</feature>
<feature type="disulfide bond" evidence="7">
    <location>
        <begin position="75"/>
        <end position="103"/>
    </location>
</feature>
<feature type="disulfide bond" evidence="7">
    <location>
        <begin position="77"/>
        <end position="110"/>
    </location>
</feature>
<comment type="function">
    <text evidence="2 5 6">Chemokine that acts as a chemoattractant for monocytes, macrophages and dendritic cells (PubMed:24973458). Plays a role in angiogenesis and possibly in the development of tumors (PubMed:16989774). Acts as an anti-inflammatory in the stomach. May play a role in the innate defense against infections. Activates the C-X-C chemokine receptor GPR35 to induce a rapid and transient rise in the level of intracellular calcium ions.</text>
</comment>
<comment type="subcellular location">
    <subcellularLocation>
        <location evidence="2">Secreted</location>
    </subcellularLocation>
</comment>
<comment type="tissue specificity">
    <text evidence="5 6">Detected in lung, trachea, lung, tongue thyroid, submaxillary gland, epididymis, and uterus tissues and at a lower level in ovary, prostate and in intestinal tissues.</text>
</comment>
<comment type="PTM">
    <text evidence="1">Likely to undergo an endoproteolytic process to form a four-cysteine-containing mature peptide with a canonical CXC chemokine scaffold after secretion.</text>
</comment>
<comment type="disruption phenotype">
    <text evidence="6">Mice show no defects in breeding or gross anatomy development, and they gained weight normally but exhibit a paucity of macrophages in the lungs (PubMed:24973458).</text>
</comment>
<comment type="miscellaneous">
    <text>All the mice injected with NIH3T3 cells over-expressing Cxcl17 develop rapidly progressing tumors within 21 days.</text>
</comment>
<comment type="similarity">
    <text evidence="7">Belongs to the intercrine alpha (chemokine CxC) family.</text>
</comment>
<dbReference type="EMBL" id="AY598463">
    <property type="protein sequence ID" value="AAU04874.1"/>
    <property type="molecule type" value="mRNA"/>
</dbReference>
<dbReference type="EMBL" id="AY374329">
    <property type="protein sequence ID" value="AAQ73473.1"/>
    <property type="molecule type" value="mRNA"/>
</dbReference>
<dbReference type="CCDS" id="CCDS80680.1"/>
<dbReference type="RefSeq" id="NP_705804.2">
    <property type="nucleotide sequence ID" value="NM_153576.2"/>
</dbReference>
<dbReference type="FunCoup" id="Q5UW37">
    <property type="interactions" value="506"/>
</dbReference>
<dbReference type="STRING" id="10090.ENSMUSP00000144096"/>
<dbReference type="PaxDb" id="10090-ENSMUSP00000073687"/>
<dbReference type="ProteomicsDB" id="279247"/>
<dbReference type="Antibodypedia" id="66724">
    <property type="antibodies" value="100 antibodies from 17 providers"/>
</dbReference>
<dbReference type="Ensembl" id="ENSMUST00000200880.4">
    <property type="protein sequence ID" value="ENSMUSP00000144096.2"/>
    <property type="gene ID" value="ENSMUSG00000060188.8"/>
</dbReference>
<dbReference type="GeneID" id="232983"/>
<dbReference type="KEGG" id="mmu:232983"/>
<dbReference type="UCSC" id="uc009fst.1">
    <property type="organism name" value="mouse"/>
</dbReference>
<dbReference type="AGR" id="MGI:2387642"/>
<dbReference type="CTD" id="284340"/>
<dbReference type="MGI" id="MGI:2387642">
    <property type="gene designation" value="Cxcl17"/>
</dbReference>
<dbReference type="VEuPathDB" id="HostDB:ENSMUSG00000060188"/>
<dbReference type="eggNOG" id="ENOG502TDC2">
    <property type="taxonomic scope" value="Eukaryota"/>
</dbReference>
<dbReference type="GeneTree" id="ENSGT00390000002861"/>
<dbReference type="HOGENOM" id="CLU_166962_0_0_1"/>
<dbReference type="InParanoid" id="Q5UW37"/>
<dbReference type="OMA" id="CPCDHLK"/>
<dbReference type="OrthoDB" id="88008at9989"/>
<dbReference type="PhylomeDB" id="Q5UW37"/>
<dbReference type="BioGRID-ORCS" id="232983">
    <property type="hits" value="1 hit in 36 CRISPR screens"/>
</dbReference>
<dbReference type="ChiTaRS" id="Cxcl17">
    <property type="organism name" value="mouse"/>
</dbReference>
<dbReference type="PRO" id="PR:Q5UW37"/>
<dbReference type="Proteomes" id="UP000000589">
    <property type="component" value="Chromosome 7"/>
</dbReference>
<dbReference type="RNAct" id="Q5UW37">
    <property type="molecule type" value="protein"/>
</dbReference>
<dbReference type="Bgee" id="ENSMUSG00000060188">
    <property type="expression patterns" value="Expressed in submandibular gland and 47 other cell types or tissues"/>
</dbReference>
<dbReference type="ExpressionAtlas" id="Q5UW37">
    <property type="expression patterns" value="baseline and differential"/>
</dbReference>
<dbReference type="GO" id="GO:0005615">
    <property type="term" value="C:extracellular space"/>
    <property type="evidence" value="ECO:0000250"/>
    <property type="project" value="UniProtKB"/>
</dbReference>
<dbReference type="GO" id="GO:0008009">
    <property type="term" value="F:chemokine activity"/>
    <property type="evidence" value="ECO:0000266"/>
    <property type="project" value="MGI"/>
</dbReference>
<dbReference type="GO" id="GO:0001525">
    <property type="term" value="P:angiogenesis"/>
    <property type="evidence" value="ECO:0007669"/>
    <property type="project" value="UniProtKB-KW"/>
</dbReference>
<dbReference type="GO" id="GO:0030154">
    <property type="term" value="P:cell differentiation"/>
    <property type="evidence" value="ECO:0007669"/>
    <property type="project" value="UniProtKB-KW"/>
</dbReference>
<dbReference type="GO" id="GO:0070098">
    <property type="term" value="P:chemokine-mediated signaling pathway"/>
    <property type="evidence" value="ECO:0000266"/>
    <property type="project" value="MGI"/>
</dbReference>
<dbReference type="GO" id="GO:0048246">
    <property type="term" value="P:macrophage chemotaxis"/>
    <property type="evidence" value="ECO:0000315"/>
    <property type="project" value="MGI"/>
</dbReference>
<dbReference type="GO" id="GO:0050728">
    <property type="term" value="P:negative regulation of inflammatory response"/>
    <property type="evidence" value="ECO:0000250"/>
    <property type="project" value="UniProtKB"/>
</dbReference>
<dbReference type="GO" id="GO:0007204">
    <property type="term" value="P:positive regulation of cytosolic calcium ion concentration"/>
    <property type="evidence" value="ECO:0000266"/>
    <property type="project" value="MGI"/>
</dbReference>
<dbReference type="GO" id="GO:0070374">
    <property type="term" value="P:positive regulation of ERK1 and ERK2 cascade"/>
    <property type="evidence" value="ECO:0000250"/>
    <property type="project" value="UniProtKB"/>
</dbReference>
<dbReference type="GO" id="GO:0010759">
    <property type="term" value="P:positive regulation of macrophage chemotaxis"/>
    <property type="evidence" value="ECO:0000315"/>
    <property type="project" value="UniProtKB"/>
</dbReference>
<dbReference type="GO" id="GO:0090026">
    <property type="term" value="P:positive regulation of monocyte chemotaxis"/>
    <property type="evidence" value="ECO:0000250"/>
    <property type="project" value="UniProtKB"/>
</dbReference>
<dbReference type="GO" id="GO:0010575">
    <property type="term" value="P:positive regulation of vascular endothelial growth factor production"/>
    <property type="evidence" value="ECO:0000250"/>
    <property type="project" value="UniProtKB"/>
</dbReference>
<dbReference type="InterPro" id="IPR029183">
    <property type="entry name" value="CXCL17"/>
</dbReference>
<dbReference type="PANTHER" id="PTHR37351">
    <property type="entry name" value="C-X-C MOTIF CHEMOKINE 17"/>
    <property type="match status" value="1"/>
</dbReference>
<dbReference type="PANTHER" id="PTHR37351:SF1">
    <property type="entry name" value="C-X-C MOTIF CHEMOKINE 17"/>
    <property type="match status" value="1"/>
</dbReference>
<dbReference type="Pfam" id="PF15211">
    <property type="entry name" value="CXCL17"/>
    <property type="match status" value="1"/>
</dbReference>
<evidence type="ECO:0000250" key="1">
    <source>
        <dbReference type="UniProtKB" id="D4A875"/>
    </source>
</evidence>
<evidence type="ECO:0000250" key="2">
    <source>
        <dbReference type="UniProtKB" id="Q6UXB2"/>
    </source>
</evidence>
<evidence type="ECO:0000255" key="3"/>
<evidence type="ECO:0000256" key="4">
    <source>
        <dbReference type="SAM" id="MobiDB-lite"/>
    </source>
</evidence>
<evidence type="ECO:0000269" key="5">
    <source>
    </source>
</evidence>
<evidence type="ECO:0000269" key="6">
    <source>
    </source>
</evidence>
<evidence type="ECO:0000305" key="7"/>
<organism>
    <name type="scientific">Mus musculus</name>
    <name type="common">Mouse</name>
    <dbReference type="NCBI Taxonomy" id="10090"/>
    <lineage>
        <taxon>Eukaryota</taxon>
        <taxon>Metazoa</taxon>
        <taxon>Chordata</taxon>
        <taxon>Craniata</taxon>
        <taxon>Vertebrata</taxon>
        <taxon>Euteleostomi</taxon>
        <taxon>Mammalia</taxon>
        <taxon>Eutheria</taxon>
        <taxon>Euarchontoglires</taxon>
        <taxon>Glires</taxon>
        <taxon>Rodentia</taxon>
        <taxon>Myomorpha</taxon>
        <taxon>Muroidea</taxon>
        <taxon>Muridae</taxon>
        <taxon>Murinae</taxon>
        <taxon>Mus</taxon>
        <taxon>Mus</taxon>
    </lineage>
</organism>
<keyword id="KW-0037">Angiogenesis</keyword>
<keyword id="KW-0145">Chemotaxis</keyword>
<keyword id="KW-0165">Cleavage on pair of basic residues</keyword>
<keyword id="KW-0217">Developmental protein</keyword>
<keyword id="KW-0221">Differentiation</keyword>
<keyword id="KW-1015">Disulfide bond</keyword>
<keyword id="KW-1185">Reference proteome</keyword>
<keyword id="KW-0964">Secreted</keyword>
<keyword id="KW-0732">Signal</keyword>
<gene>
    <name type="primary">Cxcl17</name>
    <name type="synonym">Vcc1</name>
</gene>
<reference key="1">
    <citation type="journal article" date="2006" name="Biochem. Biophys. Res. Commun.">
        <title>VCC-1, a novel chemokine, promotes tumor growth.</title>
        <authorList>
            <person name="Weinstein E.J."/>
            <person name="Head R."/>
            <person name="Griggs D.W."/>
            <person name="Sun D."/>
            <person name="Evans R.J."/>
            <person name="Swearingen M.L."/>
            <person name="Westlin M.M."/>
            <person name="Mazzarella R."/>
        </authorList>
    </citation>
    <scope>NUCLEOTIDE SEQUENCE [MRNA]</scope>
    <scope>FUNCTION</scope>
    <scope>TISSUE SPECIFICITY</scope>
    <source>
        <tissue>Embryo</tissue>
    </source>
</reference>
<reference key="2">
    <citation type="submission" date="2003-08" db="EMBL/GenBank/DDBJ databases">
        <title>13.6-kDa protein expressed in liver.</title>
        <authorList>
            <person name="Nazarian R."/>
            <person name="Dell'Angelica E.C."/>
        </authorList>
    </citation>
    <scope>NUCLEOTIDE SEQUENCE [MRNA]</scope>
    <source>
        <strain>C57BL/6J</strain>
        <tissue>Liver</tissue>
    </source>
</reference>
<reference key="3">
    <citation type="journal article" date="2014" name="J. Immunol.">
        <title>CXCL17 is a major chemotactic factor for lung macrophages.</title>
        <authorList>
            <person name="Burkhardt A.M."/>
            <person name="Maravillas-Montero J.L."/>
            <person name="Carnevale C.D."/>
            <person name="Vilches-Cisneros N."/>
            <person name="Flores J.P."/>
            <person name="Hevezi P.A."/>
            <person name="Zlotnik A."/>
        </authorList>
    </citation>
    <scope>FUNCTION</scope>
    <scope>TISSUE SPECIFICITY</scope>
    <scope>DISRUPTION PHENOTYPE</scope>
</reference>
<sequence length="119" mass="13627">MKLLASPFLLLLPVMLMSMVFSSPNPGVARSHGDQHLAPRRWLLEGGQECECKDWFLQAPKRKATAVLGPPRKQCPCDHVKGREKKNRHQKHHRKSQRPSRACQQFLKRCHLASFALPL</sequence>